<organism>
    <name type="scientific">Medicago sativa</name>
    <name type="common">Alfalfa</name>
    <dbReference type="NCBI Taxonomy" id="3879"/>
    <lineage>
        <taxon>Eukaryota</taxon>
        <taxon>Viridiplantae</taxon>
        <taxon>Streptophyta</taxon>
        <taxon>Embryophyta</taxon>
        <taxon>Tracheophyta</taxon>
        <taxon>Spermatophyta</taxon>
        <taxon>Magnoliopsida</taxon>
        <taxon>eudicotyledons</taxon>
        <taxon>Gunneridae</taxon>
        <taxon>Pentapetalae</taxon>
        <taxon>rosids</taxon>
        <taxon>fabids</taxon>
        <taxon>Fabales</taxon>
        <taxon>Fabaceae</taxon>
        <taxon>Papilionoideae</taxon>
        <taxon>50 kb inversion clade</taxon>
        <taxon>NPAAA clade</taxon>
        <taxon>Hologalegina</taxon>
        <taxon>IRL clade</taxon>
        <taxon>Trifolieae</taxon>
        <taxon>Medicago</taxon>
    </lineage>
</organism>
<proteinExistence type="evidence at protein level"/>
<evidence type="ECO:0000250" key="1"/>
<evidence type="ECO:0000269" key="2">
    <source>
    </source>
</evidence>
<evidence type="ECO:0000269" key="3">
    <source>
    </source>
</evidence>
<evidence type="ECO:0000269" key="4">
    <source>
    </source>
</evidence>
<evidence type="ECO:0000305" key="5"/>
<evidence type="ECO:0007829" key="6">
    <source>
        <dbReference type="PDB" id="1EYQ"/>
    </source>
</evidence>
<evidence type="ECO:0007829" key="7">
    <source>
        <dbReference type="PDB" id="1FM8"/>
    </source>
</evidence>
<evidence type="ECO:0007829" key="8">
    <source>
        <dbReference type="PDB" id="1JX1"/>
    </source>
</evidence>
<name>CFI1_MEDSA</name>
<feature type="chain" id="PRO_0000166434" description="Chalcone--flavanone isomerase 1">
    <location>
        <begin position="1"/>
        <end position="222"/>
    </location>
</feature>
<feature type="binding site" evidence="1">
    <location>
        <position position="48"/>
    </location>
    <ligand>
        <name>substrate</name>
    </ligand>
</feature>
<feature type="binding site" evidence="1">
    <location>
        <position position="113"/>
    </location>
    <ligand>
        <name>substrate</name>
    </ligand>
</feature>
<feature type="binding site" evidence="1">
    <location>
        <position position="190"/>
    </location>
    <ligand>
        <name>substrate</name>
    </ligand>
</feature>
<feature type="site" description="Important for catalytic activity">
    <location>
        <position position="106"/>
    </location>
</feature>
<feature type="mutagenesis site" description="Strongly reduced reaction rate." evidence="4">
    <original>T</original>
    <variation>A</variation>
    <location>
        <position position="48"/>
    </location>
</feature>
<feature type="mutagenesis site" description="Reduced reaction rate." evidence="4">
    <original>T</original>
    <variation>S</variation>
    <location>
        <position position="48"/>
    </location>
</feature>
<feature type="mutagenesis site" description="Strongly reduced reaction rate." evidence="2 4">
    <original>Y</original>
    <variation>F</variation>
    <location>
        <position position="106"/>
    </location>
</feature>
<feature type="mutagenesis site" description="Reduced reaction rate." evidence="4">
    <original>N</original>
    <variation>A</variation>
    <location>
        <position position="113"/>
    </location>
</feature>
<feature type="mutagenesis site" description="Reduced reaction rate." evidence="4">
    <original>T</original>
    <variation>A</variation>
    <location>
        <position position="190"/>
    </location>
</feature>
<feature type="strand" evidence="6">
    <location>
        <begin position="8"/>
        <end position="10"/>
    </location>
</feature>
<feature type="strand" evidence="6">
    <location>
        <begin position="13"/>
        <end position="15"/>
    </location>
</feature>
<feature type="strand" evidence="6">
    <location>
        <begin position="17"/>
        <end position="20"/>
    </location>
</feature>
<feature type="turn" evidence="6">
    <location>
        <begin position="22"/>
        <end position="24"/>
    </location>
</feature>
<feature type="strand" evidence="6">
    <location>
        <begin position="27"/>
        <end position="40"/>
    </location>
</feature>
<feature type="strand" evidence="6">
    <location>
        <begin position="43"/>
        <end position="55"/>
    </location>
</feature>
<feature type="helix" evidence="6">
    <location>
        <begin position="58"/>
        <end position="66"/>
    </location>
</feature>
<feature type="helix" evidence="6">
    <location>
        <begin position="71"/>
        <end position="75"/>
    </location>
</feature>
<feature type="helix" evidence="6">
    <location>
        <begin position="78"/>
        <end position="86"/>
    </location>
</feature>
<feature type="strand" evidence="7">
    <location>
        <begin position="87"/>
        <end position="89"/>
    </location>
</feature>
<feature type="strand" evidence="6">
    <location>
        <begin position="91"/>
        <end position="99"/>
    </location>
</feature>
<feature type="helix" evidence="6">
    <location>
        <begin position="103"/>
        <end position="120"/>
    </location>
</feature>
<feature type="helix" evidence="6">
    <location>
        <begin position="126"/>
        <end position="139"/>
    </location>
</feature>
<feature type="strand" evidence="8">
    <location>
        <begin position="142"/>
        <end position="144"/>
    </location>
</feature>
<feature type="strand" evidence="6">
    <location>
        <begin position="149"/>
        <end position="155"/>
    </location>
</feature>
<feature type="turn" evidence="6">
    <location>
        <begin position="156"/>
        <end position="158"/>
    </location>
</feature>
<feature type="strand" evidence="6">
    <location>
        <begin position="159"/>
        <end position="169"/>
    </location>
</feature>
<feature type="strand" evidence="6">
    <location>
        <begin position="175"/>
        <end position="179"/>
    </location>
</feature>
<feature type="helix" evidence="6">
    <location>
        <begin position="181"/>
        <end position="192"/>
    </location>
</feature>
<feature type="helix" evidence="6">
    <location>
        <begin position="200"/>
        <end position="214"/>
    </location>
</feature>
<dbReference type="EC" id="5.5.1.6"/>
<dbReference type="EMBL" id="M91079">
    <property type="protein sequence ID" value="AAB41524.1"/>
    <property type="molecule type" value="mRNA"/>
</dbReference>
<dbReference type="PIR" id="S44371">
    <property type="entry name" value="S44371"/>
</dbReference>
<dbReference type="PDB" id="1EYP">
    <property type="method" value="X-ray"/>
    <property type="resolution" value="2.50 A"/>
    <property type="chains" value="A/B=1-222"/>
</dbReference>
<dbReference type="PDB" id="1EYQ">
    <property type="method" value="X-ray"/>
    <property type="resolution" value="1.85 A"/>
    <property type="chains" value="A/B=1-222"/>
</dbReference>
<dbReference type="PDB" id="1FM7">
    <property type="method" value="X-ray"/>
    <property type="resolution" value="2.30 A"/>
    <property type="chains" value="A/B=1-222"/>
</dbReference>
<dbReference type="PDB" id="1FM8">
    <property type="method" value="X-ray"/>
    <property type="resolution" value="2.30 A"/>
    <property type="chains" value="A/B=1-222"/>
</dbReference>
<dbReference type="PDB" id="1JEP">
    <property type="method" value="X-ray"/>
    <property type="resolution" value="2.10 A"/>
    <property type="chains" value="A/B=1-222"/>
</dbReference>
<dbReference type="PDB" id="1JX0">
    <property type="method" value="X-ray"/>
    <property type="resolution" value="2.85 A"/>
    <property type="chains" value="A/B=1-222"/>
</dbReference>
<dbReference type="PDB" id="1JX1">
    <property type="method" value="X-ray"/>
    <property type="resolution" value="2.30 A"/>
    <property type="chains" value="A/B/C/D/E/F=1-222"/>
</dbReference>
<dbReference type="PDB" id="6CJN">
    <property type="method" value="X-ray"/>
    <property type="resolution" value="2.40 A"/>
    <property type="chains" value="A/B=1-222"/>
</dbReference>
<dbReference type="PDB" id="6CJO">
    <property type="method" value="X-ray"/>
    <property type="resolution" value="2.40 A"/>
    <property type="chains" value="A/B=1-222"/>
</dbReference>
<dbReference type="PDBsum" id="1EYP"/>
<dbReference type="PDBsum" id="1EYQ"/>
<dbReference type="PDBsum" id="1FM7"/>
<dbReference type="PDBsum" id="1FM8"/>
<dbReference type="PDBsum" id="1JEP"/>
<dbReference type="PDBsum" id="1JX0"/>
<dbReference type="PDBsum" id="1JX1"/>
<dbReference type="PDBsum" id="6CJN"/>
<dbReference type="PDBsum" id="6CJO"/>
<dbReference type="SMR" id="P28012"/>
<dbReference type="BioCyc" id="MetaCyc:MONOMER-18291"/>
<dbReference type="BRENDA" id="5.5.1.6">
    <property type="organism ID" value="3078"/>
</dbReference>
<dbReference type="SABIO-RK" id="P28012"/>
<dbReference type="UniPathway" id="UPA00154"/>
<dbReference type="EvolutionaryTrace" id="P28012"/>
<dbReference type="GO" id="GO:0045430">
    <property type="term" value="F:chalcone isomerase activity"/>
    <property type="evidence" value="ECO:0007669"/>
    <property type="project" value="UniProtKB-EC"/>
</dbReference>
<dbReference type="GO" id="GO:0009813">
    <property type="term" value="P:flavonoid biosynthetic process"/>
    <property type="evidence" value="ECO:0007669"/>
    <property type="project" value="UniProtKB-UniPathway"/>
</dbReference>
<dbReference type="Gene3D" id="1.10.890.20">
    <property type="match status" value="1"/>
</dbReference>
<dbReference type="Gene3D" id="3.50.70.10">
    <property type="match status" value="1"/>
</dbReference>
<dbReference type="InterPro" id="IPR044164">
    <property type="entry name" value="CFI"/>
</dbReference>
<dbReference type="InterPro" id="IPR016087">
    <property type="entry name" value="Chalcone_isomerase"/>
</dbReference>
<dbReference type="InterPro" id="IPR016088">
    <property type="entry name" value="Chalcone_isomerase_3-sand"/>
</dbReference>
<dbReference type="InterPro" id="IPR016089">
    <property type="entry name" value="Chalcone_isomerase_bundle_sf"/>
</dbReference>
<dbReference type="InterPro" id="IPR036298">
    <property type="entry name" value="Chalcone_isomerase_sf"/>
</dbReference>
<dbReference type="PANTHER" id="PTHR28039:SF10">
    <property type="entry name" value="CHALCONE--FLAVANONE ISOMERASE 1A"/>
    <property type="match status" value="1"/>
</dbReference>
<dbReference type="PANTHER" id="PTHR28039">
    <property type="entry name" value="CHALCONE--FLAVONONE ISOMERASE 1-RELATED"/>
    <property type="match status" value="1"/>
</dbReference>
<dbReference type="Pfam" id="PF02431">
    <property type="entry name" value="Chalcone"/>
    <property type="match status" value="1"/>
</dbReference>
<dbReference type="SUPFAM" id="SSF54626">
    <property type="entry name" value="Chalcone isomerase"/>
    <property type="match status" value="1"/>
</dbReference>
<sequence>MAASITAITVENLEYPAVVTSPVTGKSYFLGGAGERGLTIEGNFIKFTAIGVYLEDIAVASLAAKWKGKSSEELLETLDFYRDIISGPFEKLIRGSKIRELSGPEYSRKVMENCVAHLKSVGTYGDAEAEAMQKFAEAFKPVNFPPGASVFYRQSPDGILGLSFSPDTSIPEKEAALIENKAVSSAVLETMIGEHAVSPDLKRCLAARLPALLNEGAFKIGN</sequence>
<protein>
    <recommendedName>
        <fullName>Chalcone--flavanone isomerase 1</fullName>
        <shortName>Chalcone isomerase 1</shortName>
        <ecNumber>5.5.1.6</ecNumber>
    </recommendedName>
</protein>
<comment type="function">
    <text evidence="2 3 4">Catalyzes the intramolecular cyclization of bicyclic chalcones into tricyclic (S)-flavanones. Responsible for the isomerization of 4,2',4',6'-tetrahydroxychalcone (also termed chalcone) into naringenin.</text>
</comment>
<comment type="catalytic activity">
    <reaction>
        <text>a chalcone = a flavanone.</text>
        <dbReference type="EC" id="5.5.1.6"/>
    </reaction>
</comment>
<comment type="biophysicochemical properties">
    <kinetics>
        <KM evidence="2 3 4">8.4 uM for 4,2',4'-trihydroxychalcone (at pH 7.5 and 25 degrees Celsius)</KM>
        <KM evidence="2 3 4">15.7 uM for 6'-deoxychalcone (at pH 7.5 and 25 degrees Celsius)</KM>
        <KM evidence="2 3 4">22.7 uM for 2',4'-dihydroxychalcone (at pH 7.5 and 25 degrees Celsius)</KM>
        <KM evidence="2 3 4">42.5 uM for 4,2'-dihydroxychalcone (at pH 7.5 and 25 degrees Celsius)</KM>
        <KM evidence="2 3 4">112 uM for 4,2',4',6'-tetrahydroxychalcone (at pH 7.5 and 25 degrees Celsius)</KM>
    </kinetics>
    <phDependence>
        <text evidence="2 3 4">Optimum pH is 7-8.5 with 4,2',4'-trihydroxychalcone as substrate, at 25 degrees Celsius.</text>
    </phDependence>
</comment>
<comment type="pathway">
    <text>Secondary metabolite biosynthesis; flavonoid biosynthesis.</text>
</comment>
<comment type="developmental stage">
    <text>Highest expression in young root tips.</text>
</comment>
<comment type="miscellaneous">
    <text>Part of the biosynthetic pathway for all classes of flavonoids, a large class of secondary plant metabolites, many of which are brightly colored.</text>
</comment>
<comment type="similarity">
    <text evidence="5">Belongs to the chalcone isomerase family.</text>
</comment>
<accession>P28012</accession>
<keyword id="KW-0002">3D-structure</keyword>
<keyword id="KW-0284">Flavonoid biosynthesis</keyword>
<keyword id="KW-0413">Isomerase</keyword>
<reference key="1">
    <citation type="journal article" date="1994" name="Plant Mol. Biol.">
        <title>Isolation of chalcone synthase and chalcone isomerase cDNAs from alfalfa (Medicago sativa L.): highest transcript levels occur in young roots and root tips.</title>
        <authorList>
            <person name="McKhann H.I."/>
            <person name="Hirsch A.M."/>
        </authorList>
    </citation>
    <scope>NUCLEOTIDE SEQUENCE [MRNA]</scope>
    <source>
        <strain>cv. Iroquois</strain>
    </source>
</reference>
<reference key="2">
    <citation type="journal article" date="1994" name="Plant Mol. Biol.">
        <authorList>
            <person name="McKhann H.I."/>
            <person name="Hirsch A.M."/>
        </authorList>
    </citation>
    <scope>ERRATUM OF PUBMED:8193301</scope>
</reference>
<reference key="3">
    <citation type="journal article" date="2000" name="Nat. Struct. Biol.">
        <title>Structure and mechanism of the evolutionarily unique plant enzyme chalcone isomerase.</title>
        <authorList>
            <person name="Jez J.M."/>
            <person name="Bowman M.E."/>
            <person name="Dixon R.A."/>
            <person name="Noel J.P."/>
        </authorList>
    </citation>
    <scope>X-RAY CRYSTALLOGRAPHY (1.85 ANGSTROMS) IN COMPLEX WITH (2S)-NARINGENIN</scope>
    <scope>FUNCTION</scope>
    <scope>BIOPHYSICOCHEMICAL PROPERTIES</scope>
    <scope>MUTAGENESIS OF TYR-106</scope>
</reference>
<reference key="4">
    <citation type="journal article" date="2002" name="Biochemistry">
        <title>Role of hydrogen bonds in the reaction mechanism of chalcone isomerase.</title>
        <authorList>
            <person name="Jez J.M."/>
            <person name="Bowman M.E."/>
            <person name="Noel J.P."/>
        </authorList>
    </citation>
    <scope>X-RAY CRYSTALLOGRAPHY (2.3 ANGSTROMS)</scope>
    <scope>FUNCTION</scope>
    <scope>BIOPHYSICOCHEMICAL PROPERTIES</scope>
    <scope>MUTAGENESIS OF THR-48; TYR-106; ASN-113 AND THR-190</scope>
</reference>
<reference key="5">
    <citation type="journal article" date="2002" name="J. Biol. Chem.">
        <title>Reaction mechanism of chalcone isomerase. pH dependence, diffusion control, and product binding differences.</title>
        <authorList>
            <person name="Jez J.M."/>
            <person name="Noel J.P."/>
        </authorList>
    </citation>
    <scope>X-RAY CRYSTALLOGRAPHY (2.1 ANGSTROMS)</scope>
    <scope>FUNCTION</scope>
    <scope>BIOPHYSICOCHEMICAL PROPERTIES</scope>
</reference>
<gene>
    <name type="primary">CHI1</name>
    <name type="synonym">CHI-1</name>
</gene>